<protein>
    <recommendedName>
        <fullName evidence="1">Enolase</fullName>
        <ecNumber evidence="1 2">4.2.1.11</ecNumber>
    </recommendedName>
    <alternativeName>
        <fullName evidence="1">2-phospho-D-glycerate hydro-lyase</fullName>
    </alternativeName>
    <alternativeName>
        <fullName evidence="1">2-phosphoglycerate dehydratase</fullName>
    </alternativeName>
</protein>
<accession>A9WCM4</accession>
<reference key="1">
    <citation type="journal article" date="2011" name="BMC Genomics">
        <title>Complete genome sequence of the filamentous anoxygenic phototrophic bacterium Chloroflexus aurantiacus.</title>
        <authorList>
            <person name="Tang K.H."/>
            <person name="Barry K."/>
            <person name="Chertkov O."/>
            <person name="Dalin E."/>
            <person name="Han C.S."/>
            <person name="Hauser L.J."/>
            <person name="Honchak B.M."/>
            <person name="Karbach L.E."/>
            <person name="Land M.L."/>
            <person name="Lapidus A."/>
            <person name="Larimer F.W."/>
            <person name="Mikhailova N."/>
            <person name="Pitluck S."/>
            <person name="Pierson B.K."/>
            <person name="Blankenship R.E."/>
        </authorList>
    </citation>
    <scope>NUCLEOTIDE SEQUENCE [LARGE SCALE GENOMIC DNA]</scope>
    <source>
        <strain>ATCC 29366 / DSM 635 / J-10-fl</strain>
    </source>
</reference>
<reference evidence="4 5 6" key="2">
    <citation type="journal article" date="2015" name="Front. Bioeng. Biotechnol.">
        <title>Biochemical and Structural Characterization of Enolase from Chloroflexus aurantiacus: Evidence for a Thermophilic Origin.</title>
        <authorList>
            <person name="Zadvornyy O.A."/>
            <person name="Boyd E.S."/>
            <person name="Posewitz M.C."/>
            <person name="Zorin N.A."/>
            <person name="Peters J.W."/>
        </authorList>
    </citation>
    <scope>X-RAY CRYSTALLOGRAPHY (2.45 ANGSTROMS) IN COMPLEX WITH 2-PHOSPHOGLYCERIC ACID; MG(2+) AND PHOSPHOENOLPYRUVATE</scope>
    <scope>FUNCTION</scope>
    <scope>CATALYTIC ACTIVITY</scope>
    <scope>COFACTOR</scope>
    <scope>BIOPHYSICOCHEMICAL PROPERTIES</scope>
    <scope>SUBUNIT</scope>
    <scope>PROBABLE SUBCELLULAR LOCATION</scope>
    <source>
        <strain>ATCC 29366 / DSM 635 / J-10-fl</strain>
    </source>
</reference>
<keyword id="KW-0002">3D-structure</keyword>
<keyword id="KW-0963">Cytoplasm</keyword>
<keyword id="KW-0324">Glycolysis</keyword>
<keyword id="KW-0456">Lyase</keyword>
<keyword id="KW-0460">Magnesium</keyword>
<keyword id="KW-0479">Metal-binding</keyword>
<keyword id="KW-1185">Reference proteome</keyword>
<keyword id="KW-0964">Secreted</keyword>
<dbReference type="EC" id="4.2.1.11" evidence="1 2"/>
<dbReference type="EMBL" id="CP000909">
    <property type="protein sequence ID" value="ABY36986.1"/>
    <property type="molecule type" value="Genomic_DNA"/>
</dbReference>
<dbReference type="RefSeq" id="WP_012259639.1">
    <property type="nucleotide sequence ID" value="NC_010175.1"/>
</dbReference>
<dbReference type="RefSeq" id="YP_001637375.1">
    <property type="nucleotide sequence ID" value="NC_010175.1"/>
</dbReference>
<dbReference type="PDB" id="4YWS">
    <property type="method" value="X-ray"/>
    <property type="resolution" value="2.45 A"/>
    <property type="chains" value="A/B=1-426"/>
</dbReference>
<dbReference type="PDB" id="4Z17">
    <property type="method" value="X-ray"/>
    <property type="resolution" value="2.65 A"/>
    <property type="chains" value="A/B=1-426"/>
</dbReference>
<dbReference type="PDB" id="4Z1Y">
    <property type="method" value="X-ray"/>
    <property type="resolution" value="2.53 A"/>
    <property type="chains" value="A/B=1-426"/>
</dbReference>
<dbReference type="PDBsum" id="4YWS"/>
<dbReference type="PDBsum" id="4Z17"/>
<dbReference type="PDBsum" id="4Z1Y"/>
<dbReference type="SMR" id="A9WCM4"/>
<dbReference type="FunCoup" id="A9WCM4">
    <property type="interactions" value="358"/>
</dbReference>
<dbReference type="STRING" id="324602.Caur_3808"/>
<dbReference type="EnsemblBacteria" id="ABY36986">
    <property type="protein sequence ID" value="ABY36986"/>
    <property type="gene ID" value="Caur_3808"/>
</dbReference>
<dbReference type="KEGG" id="cau:Caur_3808"/>
<dbReference type="PATRIC" id="fig|324602.8.peg.4274"/>
<dbReference type="eggNOG" id="COG0148">
    <property type="taxonomic scope" value="Bacteria"/>
</dbReference>
<dbReference type="HOGENOM" id="CLU_031223_2_1_0"/>
<dbReference type="InParanoid" id="A9WCM4"/>
<dbReference type="BRENDA" id="4.2.1.11">
    <property type="organism ID" value="1352"/>
</dbReference>
<dbReference type="UniPathway" id="UPA00109">
    <property type="reaction ID" value="UER00187"/>
</dbReference>
<dbReference type="EvolutionaryTrace" id="A9WCM4"/>
<dbReference type="Proteomes" id="UP000002008">
    <property type="component" value="Chromosome"/>
</dbReference>
<dbReference type="GO" id="GO:0009986">
    <property type="term" value="C:cell surface"/>
    <property type="evidence" value="ECO:0007669"/>
    <property type="project" value="UniProtKB-SubCell"/>
</dbReference>
<dbReference type="GO" id="GO:0005576">
    <property type="term" value="C:extracellular region"/>
    <property type="evidence" value="ECO:0007669"/>
    <property type="project" value="UniProtKB-SubCell"/>
</dbReference>
<dbReference type="GO" id="GO:0000015">
    <property type="term" value="C:phosphopyruvate hydratase complex"/>
    <property type="evidence" value="ECO:0000318"/>
    <property type="project" value="GO_Central"/>
</dbReference>
<dbReference type="GO" id="GO:0000287">
    <property type="term" value="F:magnesium ion binding"/>
    <property type="evidence" value="ECO:0007669"/>
    <property type="project" value="UniProtKB-UniRule"/>
</dbReference>
<dbReference type="GO" id="GO:0004634">
    <property type="term" value="F:phosphopyruvate hydratase activity"/>
    <property type="evidence" value="ECO:0000318"/>
    <property type="project" value="GO_Central"/>
</dbReference>
<dbReference type="GO" id="GO:0006096">
    <property type="term" value="P:glycolytic process"/>
    <property type="evidence" value="ECO:0000318"/>
    <property type="project" value="GO_Central"/>
</dbReference>
<dbReference type="CDD" id="cd03313">
    <property type="entry name" value="enolase"/>
    <property type="match status" value="1"/>
</dbReference>
<dbReference type="FunFam" id="3.20.20.120:FF:000001">
    <property type="entry name" value="Enolase"/>
    <property type="match status" value="1"/>
</dbReference>
<dbReference type="FunFam" id="3.30.390.10:FF:000001">
    <property type="entry name" value="Enolase"/>
    <property type="match status" value="1"/>
</dbReference>
<dbReference type="Gene3D" id="3.20.20.120">
    <property type="entry name" value="Enolase-like C-terminal domain"/>
    <property type="match status" value="1"/>
</dbReference>
<dbReference type="Gene3D" id="3.30.390.10">
    <property type="entry name" value="Enolase-like, N-terminal domain"/>
    <property type="match status" value="1"/>
</dbReference>
<dbReference type="HAMAP" id="MF_00318">
    <property type="entry name" value="Enolase"/>
    <property type="match status" value="1"/>
</dbReference>
<dbReference type="InterPro" id="IPR000941">
    <property type="entry name" value="Enolase"/>
</dbReference>
<dbReference type="InterPro" id="IPR036849">
    <property type="entry name" value="Enolase-like_C_sf"/>
</dbReference>
<dbReference type="InterPro" id="IPR029017">
    <property type="entry name" value="Enolase-like_N"/>
</dbReference>
<dbReference type="InterPro" id="IPR020810">
    <property type="entry name" value="Enolase_C"/>
</dbReference>
<dbReference type="InterPro" id="IPR020809">
    <property type="entry name" value="Enolase_CS"/>
</dbReference>
<dbReference type="InterPro" id="IPR020811">
    <property type="entry name" value="Enolase_N"/>
</dbReference>
<dbReference type="NCBIfam" id="TIGR01060">
    <property type="entry name" value="eno"/>
    <property type="match status" value="1"/>
</dbReference>
<dbReference type="PANTHER" id="PTHR11902">
    <property type="entry name" value="ENOLASE"/>
    <property type="match status" value="1"/>
</dbReference>
<dbReference type="PANTHER" id="PTHR11902:SF1">
    <property type="entry name" value="ENOLASE"/>
    <property type="match status" value="1"/>
</dbReference>
<dbReference type="Pfam" id="PF00113">
    <property type="entry name" value="Enolase_C"/>
    <property type="match status" value="1"/>
</dbReference>
<dbReference type="Pfam" id="PF03952">
    <property type="entry name" value="Enolase_N"/>
    <property type="match status" value="1"/>
</dbReference>
<dbReference type="PIRSF" id="PIRSF001400">
    <property type="entry name" value="Enolase"/>
    <property type="match status" value="1"/>
</dbReference>
<dbReference type="PRINTS" id="PR00148">
    <property type="entry name" value="ENOLASE"/>
</dbReference>
<dbReference type="SFLD" id="SFLDF00002">
    <property type="entry name" value="enolase"/>
    <property type="match status" value="1"/>
</dbReference>
<dbReference type="SFLD" id="SFLDG00178">
    <property type="entry name" value="enolase"/>
    <property type="match status" value="1"/>
</dbReference>
<dbReference type="SMART" id="SM01192">
    <property type="entry name" value="Enolase_C"/>
    <property type="match status" value="1"/>
</dbReference>
<dbReference type="SMART" id="SM01193">
    <property type="entry name" value="Enolase_N"/>
    <property type="match status" value="1"/>
</dbReference>
<dbReference type="SUPFAM" id="SSF51604">
    <property type="entry name" value="Enolase C-terminal domain-like"/>
    <property type="match status" value="1"/>
</dbReference>
<dbReference type="SUPFAM" id="SSF54826">
    <property type="entry name" value="Enolase N-terminal domain-like"/>
    <property type="match status" value="1"/>
</dbReference>
<dbReference type="PROSITE" id="PS00164">
    <property type="entry name" value="ENOLASE"/>
    <property type="match status" value="1"/>
</dbReference>
<comment type="function">
    <text evidence="1 2">Catalyzes the reversible conversion of 2-phosphoglycerate (2-PG) into phosphoenolpyruvate (PEP) (PubMed:26082925). It is essential for the degradation of carbohydrates via glycolysis.</text>
</comment>
<comment type="catalytic activity">
    <reaction evidence="1 2">
        <text>(2R)-2-phosphoglycerate = phosphoenolpyruvate + H2O</text>
        <dbReference type="Rhea" id="RHEA:10164"/>
        <dbReference type="ChEBI" id="CHEBI:15377"/>
        <dbReference type="ChEBI" id="CHEBI:58289"/>
        <dbReference type="ChEBI" id="CHEBI:58702"/>
        <dbReference type="EC" id="4.2.1.11"/>
    </reaction>
    <physiologicalReaction direction="left-to-right" evidence="2">
        <dbReference type="Rhea" id="RHEA:10165"/>
    </physiologicalReaction>
    <physiologicalReaction direction="right-to-left" evidence="3">
        <dbReference type="Rhea" id="RHEA:10166"/>
    </physiologicalReaction>
</comment>
<comment type="cofactor">
    <cofactor evidence="1 2">
        <name>Mg(2+)</name>
        <dbReference type="ChEBI" id="CHEBI:18420"/>
    </cofactor>
    <text evidence="1 2">Binds a second Mg(2+) ion via substrate during catalysis (PubMed:26082925).</text>
</comment>
<comment type="biophysicochemical properties">
    <kinetics>
        <KM evidence="2">35 uM for 2-phosphoglycerate (2-PG) at 80 degrees Celsius</KM>
        <KM evidence="2">158 uM for 2-PG at 25 degrees Celsius</KM>
        <Vmax evidence="2">50.0 umol/min/mg enzyme for 2-PG at 80 degrees Celsius</Vmax>
        <Vmax evidence="2">9.0 umol/min/mg enzyme for 2-PG at 25 degrees Celsius</Vmax>
    </kinetics>
    <phDependence>
        <text evidence="2">Optimum pH is 6.5, thermostable up to 85 degrees Celsius, at 90 degrees it loses about 50% activity (PubMed:26082925).</text>
    </phDependence>
    <temperatureDependence>
        <text evidence="2">Optimum temperature is 80 degrees Celsius.</text>
    </temperatureDependence>
</comment>
<comment type="pathway">
    <text evidence="1">Carbohydrate degradation; glycolysis; pyruvate from D-glyceraldehyde 3-phosphate: step 4/5.</text>
</comment>
<comment type="subunit">
    <text evidence="2">Homodimer (PubMed:26082925).</text>
</comment>
<comment type="subcellular location">
    <subcellularLocation>
        <location evidence="1 3">Cytoplasm</location>
    </subcellularLocation>
    <subcellularLocation>
        <location evidence="1">Secreted</location>
    </subcellularLocation>
    <subcellularLocation>
        <location evidence="1">Cell surface</location>
    </subcellularLocation>
    <text evidence="1">Fractions of enolase are present in both the cytoplasm and on the cell surface.</text>
</comment>
<comment type="similarity">
    <text evidence="1">Belongs to the enolase family.</text>
</comment>
<feature type="chain" id="PRO_1000079126" description="Enolase">
    <location>
        <begin position="1"/>
        <end position="426"/>
    </location>
</feature>
<feature type="active site" description="Proton donor" evidence="1">
    <location>
        <position position="206"/>
    </location>
</feature>
<feature type="active site" description="Proton acceptor" evidence="1">
    <location>
        <position position="338"/>
    </location>
</feature>
<feature type="binding site" evidence="5">
    <location>
        <position position="41"/>
    </location>
    <ligand>
        <name>phosphoenolpyruvate</name>
        <dbReference type="ChEBI" id="CHEBI:58702"/>
    </ligand>
</feature>
<feature type="binding site" evidence="2">
    <location>
        <position position="43"/>
    </location>
    <ligand>
        <name>Mg(2+)</name>
        <dbReference type="ChEBI" id="CHEBI:18420"/>
        <label>2</label>
    </ligand>
</feature>
<feature type="binding site" evidence="2 6">
    <location>
        <position position="165"/>
    </location>
    <ligand>
        <name>(2R)-2-phosphoglycerate</name>
        <dbReference type="ChEBI" id="CHEBI:58289"/>
    </ligand>
</feature>
<feature type="binding site" evidence="2 5">
    <location>
        <position position="165"/>
    </location>
    <ligand>
        <name>phosphoenolpyruvate</name>
        <dbReference type="ChEBI" id="CHEBI:58702"/>
    </ligand>
</feature>
<feature type="binding site" evidence="2 6">
    <location>
        <position position="206"/>
    </location>
    <ligand>
        <name>(2R)-2-phosphoglycerate</name>
        <dbReference type="ChEBI" id="CHEBI:58289"/>
    </ligand>
</feature>
<feature type="binding site" evidence="1 2 4 5 6">
    <location>
        <position position="243"/>
    </location>
    <ligand>
        <name>Mg(2+)</name>
        <dbReference type="ChEBI" id="CHEBI:18420"/>
        <label>1</label>
    </ligand>
</feature>
<feature type="binding site" evidence="1 2 4 5 6">
    <location>
        <position position="286"/>
    </location>
    <ligand>
        <name>Mg(2+)</name>
        <dbReference type="ChEBI" id="CHEBI:18420"/>
        <label>1</label>
    </ligand>
</feature>
<feature type="binding site" evidence="1 2 4 5 6">
    <location>
        <position position="313"/>
    </location>
    <ligand>
        <name>Mg(2+)</name>
        <dbReference type="ChEBI" id="CHEBI:18420"/>
        <label>1</label>
    </ligand>
</feature>
<feature type="binding site" evidence="5">
    <location>
        <position position="313"/>
    </location>
    <ligand>
        <name>phosphoenolpyruvate</name>
        <dbReference type="ChEBI" id="CHEBI:58702"/>
    </ligand>
</feature>
<feature type="binding site" evidence="1 6">
    <location>
        <position position="338"/>
    </location>
    <ligand>
        <name>(2R)-2-phosphoglycerate</name>
        <dbReference type="ChEBI" id="CHEBI:58289"/>
    </ligand>
</feature>
<feature type="binding site" evidence="2 5">
    <location>
        <position position="338"/>
    </location>
    <ligand>
        <name>phosphoenolpyruvate</name>
        <dbReference type="ChEBI" id="CHEBI:58702"/>
    </ligand>
</feature>
<feature type="binding site" evidence="1 6">
    <location>
        <position position="367"/>
    </location>
    <ligand>
        <name>(2R)-2-phosphoglycerate</name>
        <dbReference type="ChEBI" id="CHEBI:58289"/>
    </ligand>
</feature>
<feature type="binding site" evidence="5">
    <location>
        <position position="367"/>
    </location>
    <ligand>
        <name>phosphoenolpyruvate</name>
        <dbReference type="ChEBI" id="CHEBI:58702"/>
    </ligand>
</feature>
<feature type="binding site" evidence="1 6">
    <location>
        <position position="368"/>
    </location>
    <ligand>
        <name>(2R)-2-phosphoglycerate</name>
        <dbReference type="ChEBI" id="CHEBI:58289"/>
    </ligand>
</feature>
<feature type="binding site" evidence="2 5">
    <location>
        <position position="368"/>
    </location>
    <ligand>
        <name>phosphoenolpyruvate</name>
        <dbReference type="ChEBI" id="CHEBI:58702"/>
    </ligand>
</feature>
<feature type="binding site" evidence="5">
    <location>
        <position position="389"/>
    </location>
    <ligand>
        <name>phosphoenolpyruvate</name>
        <dbReference type="ChEBI" id="CHEBI:58702"/>
    </ligand>
</feature>
<feature type="strand" evidence="7">
    <location>
        <begin position="4"/>
        <end position="14"/>
    </location>
</feature>
<feature type="strand" evidence="7">
    <location>
        <begin position="20"/>
        <end position="28"/>
    </location>
</feature>
<feature type="strand" evidence="7">
    <location>
        <begin position="33"/>
        <end position="37"/>
    </location>
</feature>
<feature type="strand" evidence="7">
    <location>
        <begin position="46"/>
        <end position="48"/>
    </location>
</feature>
<feature type="turn" evidence="8">
    <location>
        <begin position="57"/>
        <end position="59"/>
    </location>
</feature>
<feature type="helix" evidence="7">
    <location>
        <begin position="60"/>
        <end position="62"/>
    </location>
</feature>
<feature type="helix" evidence="7">
    <location>
        <begin position="66"/>
        <end position="73"/>
    </location>
</feature>
<feature type="helix" evidence="7">
    <location>
        <begin position="75"/>
        <end position="80"/>
    </location>
</feature>
<feature type="helix" evidence="7">
    <location>
        <begin position="88"/>
        <end position="99"/>
    </location>
</feature>
<feature type="turn" evidence="7">
    <location>
        <begin position="105"/>
        <end position="107"/>
    </location>
</feature>
<feature type="helix" evidence="7">
    <location>
        <begin position="109"/>
        <end position="127"/>
    </location>
</feature>
<feature type="helix" evidence="7">
    <location>
        <begin position="131"/>
        <end position="136"/>
    </location>
</feature>
<feature type="helix" evidence="7">
    <location>
        <begin position="137"/>
        <end position="139"/>
    </location>
</feature>
<feature type="strand" evidence="7">
    <location>
        <begin position="145"/>
        <end position="152"/>
    </location>
</feature>
<feature type="helix" evidence="7">
    <location>
        <begin position="154"/>
        <end position="156"/>
    </location>
</feature>
<feature type="strand" evidence="9">
    <location>
        <begin position="158"/>
        <end position="160"/>
    </location>
</feature>
<feature type="strand" evidence="7">
    <location>
        <begin position="165"/>
        <end position="169"/>
    </location>
</feature>
<feature type="helix" evidence="7">
    <location>
        <begin position="176"/>
        <end position="195"/>
    </location>
</feature>
<feature type="turn" evidence="7">
    <location>
        <begin position="196"/>
        <end position="198"/>
    </location>
</feature>
<feature type="strand" evidence="9">
    <location>
        <begin position="205"/>
        <end position="207"/>
    </location>
</feature>
<feature type="strand" evidence="9">
    <location>
        <begin position="214"/>
        <end position="217"/>
    </location>
</feature>
<feature type="helix" evidence="7">
    <location>
        <begin position="218"/>
        <end position="229"/>
    </location>
</feature>
<feature type="turn" evidence="7">
    <location>
        <begin position="235"/>
        <end position="237"/>
    </location>
</feature>
<feature type="strand" evidence="7">
    <location>
        <begin position="238"/>
        <end position="243"/>
    </location>
</feature>
<feature type="helix" evidence="7">
    <location>
        <begin position="246"/>
        <end position="249"/>
    </location>
</feature>
<feature type="strand" evidence="8">
    <location>
        <begin position="251"/>
        <end position="254"/>
    </location>
</feature>
<feature type="turn" evidence="7">
    <location>
        <begin position="258"/>
        <end position="261"/>
    </location>
</feature>
<feature type="helix" evidence="7">
    <location>
        <begin position="267"/>
        <end position="279"/>
    </location>
</feature>
<feature type="strand" evidence="7">
    <location>
        <begin position="282"/>
        <end position="289"/>
    </location>
</feature>
<feature type="helix" evidence="7">
    <location>
        <begin position="294"/>
        <end position="304"/>
    </location>
</feature>
<feature type="turn" evidence="7">
    <location>
        <begin position="305"/>
        <end position="307"/>
    </location>
</feature>
<feature type="strand" evidence="7">
    <location>
        <begin position="308"/>
        <end position="313"/>
    </location>
</feature>
<feature type="turn" evidence="7">
    <location>
        <begin position="314"/>
        <end position="318"/>
    </location>
</feature>
<feature type="helix" evidence="7">
    <location>
        <begin position="320"/>
        <end position="328"/>
    </location>
</feature>
<feature type="strand" evidence="7">
    <location>
        <begin position="333"/>
        <end position="337"/>
    </location>
</feature>
<feature type="helix" evidence="7">
    <location>
        <begin position="339"/>
        <end position="342"/>
    </location>
</feature>
<feature type="helix" evidence="7">
    <location>
        <begin position="345"/>
        <end position="356"/>
    </location>
</feature>
<feature type="turn" evidence="9">
    <location>
        <begin position="357"/>
        <end position="359"/>
    </location>
</feature>
<feature type="strand" evidence="7">
    <location>
        <begin position="361"/>
        <end position="365"/>
    </location>
</feature>
<feature type="helix" evidence="7">
    <location>
        <begin position="375"/>
        <end position="382"/>
    </location>
</feature>
<feature type="strand" evidence="7">
    <location>
        <begin position="387"/>
        <end position="390"/>
    </location>
</feature>
<feature type="helix" evidence="7">
    <location>
        <begin position="400"/>
        <end position="412"/>
    </location>
</feature>
<feature type="helix" evidence="7">
    <location>
        <begin position="413"/>
        <end position="415"/>
    </location>
</feature>
<feature type="helix" evidence="7">
    <location>
        <begin position="420"/>
        <end position="423"/>
    </location>
</feature>
<gene>
    <name evidence="1" type="primary">eno</name>
    <name type="ordered locus">Caur_3808</name>
</gene>
<name>ENO_CHLAA</name>
<sequence>MSTLIEAIVAREVLDSRGNPTIEVDVRLESGDVGRAIVPSGASTGAHEALELRDGDKSRYNGKGVLKAVQAVNEDIAEALIGFDAADQIALDQELIALDGTPNKSKLGANAILGVSLAAAKAAAAAFGLPLYRYLGGVYAHVLPVPMMNIMNGGQHATNSTDFQEFMIMPVGAESFREGLRWGAEIYHMLKKVIHDRGFSTTVGDEGGFAPSLPTNDAPLQLIMEAIEKAGYRPGEQIVIALDPATTEIFEDGKYHLKREGRSLSSAEMVDYWVDLVNRYPIISLEDGLAEDDWEGWALLRAKLGDRVQLVGDDFLVTNVQRLQRAIEAKAANSILIKLNQIGSLTETLSAIQLAQRSGWTAVVSHRSGESEDVTIADLVVATNAGQIKTGAPARTDRIAKYNQLLRIEEELGSAARYAGRSAFKV</sequence>
<organism>
    <name type="scientific">Chloroflexus aurantiacus (strain ATCC 29366 / DSM 635 / J-10-fl)</name>
    <dbReference type="NCBI Taxonomy" id="324602"/>
    <lineage>
        <taxon>Bacteria</taxon>
        <taxon>Bacillati</taxon>
        <taxon>Chloroflexota</taxon>
        <taxon>Chloroflexia</taxon>
        <taxon>Chloroflexales</taxon>
        <taxon>Chloroflexineae</taxon>
        <taxon>Chloroflexaceae</taxon>
        <taxon>Chloroflexus</taxon>
    </lineage>
</organism>
<evidence type="ECO:0000255" key="1">
    <source>
        <dbReference type="HAMAP-Rule" id="MF_00318"/>
    </source>
</evidence>
<evidence type="ECO:0000269" key="2">
    <source>
    </source>
</evidence>
<evidence type="ECO:0000305" key="3">
    <source>
    </source>
</evidence>
<evidence type="ECO:0007744" key="4">
    <source>
        <dbReference type="PDB" id="4YWS"/>
    </source>
</evidence>
<evidence type="ECO:0007744" key="5">
    <source>
        <dbReference type="PDB" id="4Z17"/>
    </source>
</evidence>
<evidence type="ECO:0007744" key="6">
    <source>
        <dbReference type="PDB" id="4Z1Y"/>
    </source>
</evidence>
<evidence type="ECO:0007829" key="7">
    <source>
        <dbReference type="PDB" id="4YWS"/>
    </source>
</evidence>
<evidence type="ECO:0007829" key="8">
    <source>
        <dbReference type="PDB" id="4Z17"/>
    </source>
</evidence>
<evidence type="ECO:0007829" key="9">
    <source>
        <dbReference type="PDB" id="4Z1Y"/>
    </source>
</evidence>
<proteinExistence type="evidence at protein level"/>